<protein>
    <recommendedName>
        <fullName evidence="1">Ribonuclease H</fullName>
        <shortName evidence="1">RNase H</shortName>
        <ecNumber evidence="1">3.1.26.4</ecNumber>
    </recommendedName>
</protein>
<reference key="1">
    <citation type="journal article" date="2007" name="J. Bacteriol.">
        <title>Genome sequence analysis of the emerging human pathogenic acetic acid bacterium Granulibacter bethesdensis.</title>
        <authorList>
            <person name="Greenberg D.E."/>
            <person name="Porcella S.F."/>
            <person name="Zelazny A.M."/>
            <person name="Virtaneva K."/>
            <person name="Sturdevant D.E."/>
            <person name="Kupko J.J. III"/>
            <person name="Barbian K.D."/>
            <person name="Babar A."/>
            <person name="Dorward D.W."/>
            <person name="Holland S.M."/>
        </authorList>
    </citation>
    <scope>NUCLEOTIDE SEQUENCE [LARGE SCALE GENOMIC DNA]</scope>
    <source>
        <strain>ATCC BAA-1260 / CGDNIH1</strain>
    </source>
</reference>
<name>RNH_GRABC</name>
<feature type="chain" id="PRO_0000332609" description="Ribonuclease H">
    <location>
        <begin position="1"/>
        <end position="150"/>
    </location>
</feature>
<feature type="domain" description="RNase H type-1" evidence="2">
    <location>
        <begin position="7"/>
        <end position="148"/>
    </location>
</feature>
<feature type="binding site" evidence="1">
    <location>
        <position position="16"/>
    </location>
    <ligand>
        <name>Mg(2+)</name>
        <dbReference type="ChEBI" id="CHEBI:18420"/>
        <label>1</label>
    </ligand>
</feature>
<feature type="binding site" evidence="1">
    <location>
        <position position="16"/>
    </location>
    <ligand>
        <name>Mg(2+)</name>
        <dbReference type="ChEBI" id="CHEBI:18420"/>
        <label>2</label>
    </ligand>
</feature>
<feature type="binding site" evidence="1">
    <location>
        <position position="54"/>
    </location>
    <ligand>
        <name>Mg(2+)</name>
        <dbReference type="ChEBI" id="CHEBI:18420"/>
        <label>1</label>
    </ligand>
</feature>
<feature type="binding site" evidence="1">
    <location>
        <position position="76"/>
    </location>
    <ligand>
        <name>Mg(2+)</name>
        <dbReference type="ChEBI" id="CHEBI:18420"/>
        <label>1</label>
    </ligand>
</feature>
<feature type="binding site" evidence="1">
    <location>
        <position position="140"/>
    </location>
    <ligand>
        <name>Mg(2+)</name>
        <dbReference type="ChEBI" id="CHEBI:18420"/>
        <label>2</label>
    </ligand>
</feature>
<organism>
    <name type="scientific">Granulibacter bethesdensis (strain ATCC BAA-1260 / CGDNIH1)</name>
    <dbReference type="NCBI Taxonomy" id="391165"/>
    <lineage>
        <taxon>Bacteria</taxon>
        <taxon>Pseudomonadati</taxon>
        <taxon>Pseudomonadota</taxon>
        <taxon>Alphaproteobacteria</taxon>
        <taxon>Acetobacterales</taxon>
        <taxon>Acetobacteraceae</taxon>
        <taxon>Granulibacter</taxon>
    </lineage>
</organism>
<dbReference type="EC" id="3.1.26.4" evidence="1"/>
<dbReference type="EMBL" id="CP000394">
    <property type="protein sequence ID" value="ABI62775.1"/>
    <property type="molecule type" value="Genomic_DNA"/>
</dbReference>
<dbReference type="SMR" id="Q0BQX7"/>
<dbReference type="STRING" id="391165.GbCGDNIH1_1877"/>
<dbReference type="KEGG" id="gbe:GbCGDNIH1_1877"/>
<dbReference type="eggNOG" id="COG0328">
    <property type="taxonomic scope" value="Bacteria"/>
</dbReference>
<dbReference type="HOGENOM" id="CLU_030894_6_0_5"/>
<dbReference type="Proteomes" id="UP000001963">
    <property type="component" value="Chromosome"/>
</dbReference>
<dbReference type="GO" id="GO:0005737">
    <property type="term" value="C:cytoplasm"/>
    <property type="evidence" value="ECO:0007669"/>
    <property type="project" value="UniProtKB-SubCell"/>
</dbReference>
<dbReference type="GO" id="GO:0000287">
    <property type="term" value="F:magnesium ion binding"/>
    <property type="evidence" value="ECO:0007669"/>
    <property type="project" value="UniProtKB-UniRule"/>
</dbReference>
<dbReference type="GO" id="GO:0003676">
    <property type="term" value="F:nucleic acid binding"/>
    <property type="evidence" value="ECO:0007669"/>
    <property type="project" value="InterPro"/>
</dbReference>
<dbReference type="GO" id="GO:0004523">
    <property type="term" value="F:RNA-DNA hybrid ribonuclease activity"/>
    <property type="evidence" value="ECO:0007669"/>
    <property type="project" value="UniProtKB-UniRule"/>
</dbReference>
<dbReference type="GO" id="GO:0043137">
    <property type="term" value="P:DNA replication, removal of RNA primer"/>
    <property type="evidence" value="ECO:0007669"/>
    <property type="project" value="TreeGrafter"/>
</dbReference>
<dbReference type="CDD" id="cd09278">
    <property type="entry name" value="RNase_HI_prokaryote_like"/>
    <property type="match status" value="1"/>
</dbReference>
<dbReference type="FunFam" id="3.30.420.10:FF:000089">
    <property type="entry name" value="Ribonuclease H"/>
    <property type="match status" value="1"/>
</dbReference>
<dbReference type="Gene3D" id="3.30.420.10">
    <property type="entry name" value="Ribonuclease H-like superfamily/Ribonuclease H"/>
    <property type="match status" value="1"/>
</dbReference>
<dbReference type="HAMAP" id="MF_00042">
    <property type="entry name" value="RNase_H"/>
    <property type="match status" value="1"/>
</dbReference>
<dbReference type="InterPro" id="IPR050092">
    <property type="entry name" value="RNase_H"/>
</dbReference>
<dbReference type="InterPro" id="IPR012337">
    <property type="entry name" value="RNaseH-like_sf"/>
</dbReference>
<dbReference type="InterPro" id="IPR002156">
    <property type="entry name" value="RNaseH_domain"/>
</dbReference>
<dbReference type="InterPro" id="IPR036397">
    <property type="entry name" value="RNaseH_sf"/>
</dbReference>
<dbReference type="InterPro" id="IPR022892">
    <property type="entry name" value="RNaseHI"/>
</dbReference>
<dbReference type="NCBIfam" id="NF001236">
    <property type="entry name" value="PRK00203.1"/>
    <property type="match status" value="1"/>
</dbReference>
<dbReference type="PANTHER" id="PTHR10642">
    <property type="entry name" value="RIBONUCLEASE H1"/>
    <property type="match status" value="1"/>
</dbReference>
<dbReference type="PANTHER" id="PTHR10642:SF26">
    <property type="entry name" value="RIBONUCLEASE H1"/>
    <property type="match status" value="1"/>
</dbReference>
<dbReference type="Pfam" id="PF00075">
    <property type="entry name" value="RNase_H"/>
    <property type="match status" value="1"/>
</dbReference>
<dbReference type="SUPFAM" id="SSF53098">
    <property type="entry name" value="Ribonuclease H-like"/>
    <property type="match status" value="1"/>
</dbReference>
<dbReference type="PROSITE" id="PS50879">
    <property type="entry name" value="RNASE_H_1"/>
    <property type="match status" value="1"/>
</dbReference>
<comment type="function">
    <text evidence="1">Endonuclease that specifically degrades the RNA of RNA-DNA hybrids.</text>
</comment>
<comment type="catalytic activity">
    <reaction evidence="1">
        <text>Endonucleolytic cleavage to 5'-phosphomonoester.</text>
        <dbReference type="EC" id="3.1.26.4"/>
    </reaction>
</comment>
<comment type="cofactor">
    <cofactor evidence="1">
        <name>Mg(2+)</name>
        <dbReference type="ChEBI" id="CHEBI:18420"/>
    </cofactor>
    <text evidence="1">Binds 1 Mg(2+) ion per subunit. May bind a second metal ion at a regulatory site, or after substrate binding.</text>
</comment>
<comment type="subunit">
    <text evidence="1">Monomer.</text>
</comment>
<comment type="subcellular location">
    <subcellularLocation>
        <location evidence="1">Cytoplasm</location>
    </subcellularLocation>
</comment>
<comment type="similarity">
    <text evidence="1">Belongs to the RNase H family.</text>
</comment>
<accession>Q0BQX7</accession>
<proteinExistence type="inferred from homology"/>
<sequence>MDTMQGESNIVEIWTDGGCKPNPGPGGWAAILLYRGTEKELSGFDPETTNNRMELTAAAAALEALTRPCKVVLNTDSEYVRNGITRWKDGWVRRNWRNASGDPVANMDLWRRLLDAAARHEIDWRWVRGHAGNPMNERADQLATKARMEG</sequence>
<keyword id="KW-0963">Cytoplasm</keyword>
<keyword id="KW-0255">Endonuclease</keyword>
<keyword id="KW-0378">Hydrolase</keyword>
<keyword id="KW-0460">Magnesium</keyword>
<keyword id="KW-0479">Metal-binding</keyword>
<keyword id="KW-0540">Nuclease</keyword>
<keyword id="KW-1185">Reference proteome</keyword>
<gene>
    <name evidence="1" type="primary">rnhA</name>
    <name type="ordered locus">GbCGDNIH1_1877</name>
</gene>
<evidence type="ECO:0000255" key="1">
    <source>
        <dbReference type="HAMAP-Rule" id="MF_00042"/>
    </source>
</evidence>
<evidence type="ECO:0000255" key="2">
    <source>
        <dbReference type="PROSITE-ProRule" id="PRU00408"/>
    </source>
</evidence>